<sequence>MSNRDSSEHGDSSNKIASNECNEATKLGFNFTQLWSQITTTYSLIDRNDSNMFNRDERVESEQEKKSVVILGKKYDDISVDDGVIEQDIYSKIWLTYRTGFEPIAKCLDGPQPLSFVQSMVFNRNPISSTFNNFHGLLDNDNFTTDVGWGCMIRTSQALLANTYQLLFLGRGFSYGRDRSPRHDEIIDMFMDEPRAPFSLHNFIKVASESPLKVKPGQWFGPNAASLSIKRLCDNVYESNGTGRVKVVISESSNLYDDIITQMFTTLNPVPDAILVLLPVRLGIDKVNPLYHASVLELLALRQSVGIAGGKPSSSFYFFGYKGNDLLYLDPHYPQFVRNKTSVYDTYHTNSYQKLSVDDMDPSMMIGILIKDINDYEDFKSSCTKSSNKILHFHPTSEKADRRGSLSEFKRKNSEFVCIESKDVQRREDFITIDNVSRDDLNNMEGFIDMADEFDSEIDQNNKDDNFDDDEPVNVSQTSIGEEYTSTAGSRP</sequence>
<accession>Q6BYP8</accession>
<dbReference type="EC" id="3.4.22.-"/>
<dbReference type="EMBL" id="CR382133">
    <property type="protein sequence ID" value="CAG84627.2"/>
    <property type="molecule type" value="Genomic_DNA"/>
</dbReference>
<dbReference type="RefSeq" id="XP_456671.2">
    <property type="nucleotide sequence ID" value="XM_456671.1"/>
</dbReference>
<dbReference type="SMR" id="Q6BYP8"/>
<dbReference type="FunCoup" id="Q6BYP8">
    <property type="interactions" value="330"/>
</dbReference>
<dbReference type="STRING" id="284592.Q6BYP8"/>
<dbReference type="MEROPS" id="C54.001"/>
<dbReference type="GeneID" id="2899646"/>
<dbReference type="KEGG" id="dha:DEHA2A07832g"/>
<dbReference type="VEuPathDB" id="FungiDB:DEHA2A07832g"/>
<dbReference type="eggNOG" id="KOG2674">
    <property type="taxonomic scope" value="Eukaryota"/>
</dbReference>
<dbReference type="HOGENOM" id="CLU_021259_5_2_1"/>
<dbReference type="InParanoid" id="Q6BYP8"/>
<dbReference type="OMA" id="FPPFVPY"/>
<dbReference type="OrthoDB" id="2960936at2759"/>
<dbReference type="Proteomes" id="UP000000599">
    <property type="component" value="Chromosome A"/>
</dbReference>
<dbReference type="GO" id="GO:0005634">
    <property type="term" value="C:nucleus"/>
    <property type="evidence" value="ECO:0007669"/>
    <property type="project" value="UniProtKB-SubCell"/>
</dbReference>
<dbReference type="GO" id="GO:0000407">
    <property type="term" value="C:phagophore assembly site"/>
    <property type="evidence" value="ECO:0007669"/>
    <property type="project" value="UniProtKB-SubCell"/>
</dbReference>
<dbReference type="GO" id="GO:0004197">
    <property type="term" value="F:cysteine-type endopeptidase activity"/>
    <property type="evidence" value="ECO:0007669"/>
    <property type="project" value="TreeGrafter"/>
</dbReference>
<dbReference type="GO" id="GO:0019786">
    <property type="term" value="F:protein-phosphatidylethanolamide deconjugating activity"/>
    <property type="evidence" value="ECO:0007669"/>
    <property type="project" value="InterPro"/>
</dbReference>
<dbReference type="GO" id="GO:0035973">
    <property type="term" value="P:aggrephagy"/>
    <property type="evidence" value="ECO:0007669"/>
    <property type="project" value="TreeGrafter"/>
</dbReference>
<dbReference type="GO" id="GO:0000045">
    <property type="term" value="P:autophagosome assembly"/>
    <property type="evidence" value="ECO:0007669"/>
    <property type="project" value="TreeGrafter"/>
</dbReference>
<dbReference type="GO" id="GO:0000423">
    <property type="term" value="P:mitophagy"/>
    <property type="evidence" value="ECO:0007669"/>
    <property type="project" value="TreeGrafter"/>
</dbReference>
<dbReference type="GO" id="GO:0034727">
    <property type="term" value="P:piecemeal microautophagy of the nucleus"/>
    <property type="evidence" value="ECO:0007669"/>
    <property type="project" value="TreeGrafter"/>
</dbReference>
<dbReference type="GO" id="GO:0016485">
    <property type="term" value="P:protein processing"/>
    <property type="evidence" value="ECO:0007669"/>
    <property type="project" value="TreeGrafter"/>
</dbReference>
<dbReference type="GO" id="GO:0015031">
    <property type="term" value="P:protein transport"/>
    <property type="evidence" value="ECO:0007669"/>
    <property type="project" value="UniProtKB-KW"/>
</dbReference>
<dbReference type="InterPro" id="IPR038765">
    <property type="entry name" value="Papain-like_cys_pep_sf"/>
</dbReference>
<dbReference type="InterPro" id="IPR005078">
    <property type="entry name" value="Peptidase_C54"/>
</dbReference>
<dbReference type="InterPro" id="IPR046792">
    <property type="entry name" value="Peptidase_C54_cat"/>
</dbReference>
<dbReference type="PANTHER" id="PTHR22624:SF49">
    <property type="entry name" value="CYSTEINE PROTEASE"/>
    <property type="match status" value="1"/>
</dbReference>
<dbReference type="PANTHER" id="PTHR22624">
    <property type="entry name" value="CYSTEINE PROTEASE ATG4"/>
    <property type="match status" value="1"/>
</dbReference>
<dbReference type="Pfam" id="PF03416">
    <property type="entry name" value="Peptidase_C54"/>
    <property type="match status" value="1"/>
</dbReference>
<dbReference type="SUPFAM" id="SSF54001">
    <property type="entry name" value="Cysteine proteinases"/>
    <property type="match status" value="1"/>
</dbReference>
<feature type="chain" id="PRO_0000215861" description="Probable cysteine protease ATG4">
    <location>
        <begin position="1"/>
        <end position="492"/>
    </location>
</feature>
<feature type="region of interest" description="Disordered" evidence="3">
    <location>
        <begin position="454"/>
        <end position="492"/>
    </location>
</feature>
<feature type="compositionally biased region" description="Polar residues" evidence="3">
    <location>
        <begin position="474"/>
        <end position="492"/>
    </location>
</feature>
<feature type="active site" description="Nucleophile" evidence="2">
    <location>
        <position position="151"/>
    </location>
</feature>
<feature type="active site" evidence="2">
    <location>
        <position position="330"/>
    </location>
</feature>
<feature type="active site" evidence="2">
    <location>
        <position position="332"/>
    </location>
</feature>
<protein>
    <recommendedName>
        <fullName>Probable cysteine protease ATG4</fullName>
        <ecNumber>3.4.22.-</ecNumber>
    </recommendedName>
    <alternativeName>
        <fullName>Autophagy-related protein 4</fullName>
    </alternativeName>
</protein>
<name>ATG4_DEBHA</name>
<organism>
    <name type="scientific">Debaryomyces hansenii (strain ATCC 36239 / CBS 767 / BCRC 21394 / JCM 1990 / NBRC 0083 / IGC 2968)</name>
    <name type="common">Yeast</name>
    <name type="synonym">Torulaspora hansenii</name>
    <dbReference type="NCBI Taxonomy" id="284592"/>
    <lineage>
        <taxon>Eukaryota</taxon>
        <taxon>Fungi</taxon>
        <taxon>Dikarya</taxon>
        <taxon>Ascomycota</taxon>
        <taxon>Saccharomycotina</taxon>
        <taxon>Pichiomycetes</taxon>
        <taxon>Debaryomycetaceae</taxon>
        <taxon>Debaryomyces</taxon>
    </lineage>
</organism>
<proteinExistence type="inferred from homology"/>
<comment type="function">
    <text evidence="1">Cysteine protease that plays a key role in cytoplasm to vacuole transport (Cvt) and autophagy by mediating both proteolytic activation and delipidation of ATG8. Required for selective autophagic degradation of the nucleus (nucleophagy) as well as for mitophagy which contributes to regulate mitochondrial quantity and quality by eliminating the mitochondria to a basal level to fulfill cellular energy requirements and preventing excess ROS production. The protease activity is required for proteolytic activation of ATG8: cleaves the C-terminal amino acid of ATG8 to reveal a C-terminal glycine. ATG8 ubiquitin-like activity requires the exposure of the glycine at the C-terminus for its conjugation to phosphatidylethanolamine (PE) and its insertion to membranes, which is necessary for autophagy. The ATG8-PE conjugate mediates tethering between adjacent membranes and stimulates membrane hemifusion, leading to expansion of the autophagosomal membrane during autophagy. In addition to the protease activity, also catalyzes deconjugation of PE-conjugated forms of ATG8 during macroautophagy: ATG8 delipidation is required to release the protein from membranes, which facilitates multiple events during macroautophagy, and especially for efficient autophagosome biogenesis, the assembly of ATG9-containing tubulovesicular clusters into phagophores/autophagosomes, and for the disassembly of PAS-associated ATG components. ATG8 delipidation by ATG4 also recycles ATG8-PE generated on inappropriate membranes to maintain a reservoir of unlipidated ATG8 that is required for autophagosome formation at the PAS.</text>
</comment>
<comment type="catalytic activity">
    <reaction evidence="1">
        <text>[protein]-C-terminal L-amino acid-glycyl-phosphatidylethanolamide + H2O = [protein]-C-terminal L-amino acid-glycine + a 1,2-diacyl-sn-glycero-3-phosphoethanolamine</text>
        <dbReference type="Rhea" id="RHEA:67548"/>
        <dbReference type="Rhea" id="RHEA-COMP:17323"/>
        <dbReference type="Rhea" id="RHEA-COMP:17324"/>
        <dbReference type="ChEBI" id="CHEBI:15377"/>
        <dbReference type="ChEBI" id="CHEBI:64612"/>
        <dbReference type="ChEBI" id="CHEBI:172940"/>
        <dbReference type="ChEBI" id="CHEBI:172941"/>
    </reaction>
    <physiologicalReaction direction="left-to-right" evidence="1">
        <dbReference type="Rhea" id="RHEA:67549"/>
    </physiologicalReaction>
</comment>
<comment type="subcellular location">
    <subcellularLocation>
        <location evidence="1">Cytoplasm</location>
    </subcellularLocation>
    <subcellularLocation>
        <location evidence="1">Nucleus</location>
    </subcellularLocation>
    <subcellularLocation>
        <location evidence="1">Preautophagosomal structure</location>
    </subcellularLocation>
</comment>
<comment type="similarity">
    <text evidence="4">Belongs to the peptidase C54 family.</text>
</comment>
<reference key="1">
    <citation type="journal article" date="2004" name="Nature">
        <title>Genome evolution in yeasts.</title>
        <authorList>
            <person name="Dujon B."/>
            <person name="Sherman D."/>
            <person name="Fischer G."/>
            <person name="Durrens P."/>
            <person name="Casaregola S."/>
            <person name="Lafontaine I."/>
            <person name="de Montigny J."/>
            <person name="Marck C."/>
            <person name="Neuveglise C."/>
            <person name="Talla E."/>
            <person name="Goffard N."/>
            <person name="Frangeul L."/>
            <person name="Aigle M."/>
            <person name="Anthouard V."/>
            <person name="Babour A."/>
            <person name="Barbe V."/>
            <person name="Barnay S."/>
            <person name="Blanchin S."/>
            <person name="Beckerich J.-M."/>
            <person name="Beyne E."/>
            <person name="Bleykasten C."/>
            <person name="Boisrame A."/>
            <person name="Boyer J."/>
            <person name="Cattolico L."/>
            <person name="Confanioleri F."/>
            <person name="de Daruvar A."/>
            <person name="Despons L."/>
            <person name="Fabre E."/>
            <person name="Fairhead C."/>
            <person name="Ferry-Dumazet H."/>
            <person name="Groppi A."/>
            <person name="Hantraye F."/>
            <person name="Hennequin C."/>
            <person name="Jauniaux N."/>
            <person name="Joyet P."/>
            <person name="Kachouri R."/>
            <person name="Kerrest A."/>
            <person name="Koszul R."/>
            <person name="Lemaire M."/>
            <person name="Lesur I."/>
            <person name="Ma L."/>
            <person name="Muller H."/>
            <person name="Nicaud J.-M."/>
            <person name="Nikolski M."/>
            <person name="Oztas S."/>
            <person name="Ozier-Kalogeropoulos O."/>
            <person name="Pellenz S."/>
            <person name="Potier S."/>
            <person name="Richard G.-F."/>
            <person name="Straub M.-L."/>
            <person name="Suleau A."/>
            <person name="Swennen D."/>
            <person name="Tekaia F."/>
            <person name="Wesolowski-Louvel M."/>
            <person name="Westhof E."/>
            <person name="Wirth B."/>
            <person name="Zeniou-Meyer M."/>
            <person name="Zivanovic Y."/>
            <person name="Bolotin-Fukuhara M."/>
            <person name="Thierry A."/>
            <person name="Bouchier C."/>
            <person name="Caudron B."/>
            <person name="Scarpelli C."/>
            <person name="Gaillardin C."/>
            <person name="Weissenbach J."/>
            <person name="Wincker P."/>
            <person name="Souciet J.-L."/>
        </authorList>
    </citation>
    <scope>NUCLEOTIDE SEQUENCE [LARGE SCALE GENOMIC DNA]</scope>
    <source>
        <strain>ATCC 36239 / CBS 767 / BCRC 21394 / JCM 1990 / NBRC 0083 / IGC 2968</strain>
    </source>
</reference>
<evidence type="ECO:0000250" key="1">
    <source>
        <dbReference type="UniProtKB" id="P53867"/>
    </source>
</evidence>
<evidence type="ECO:0000250" key="2">
    <source>
        <dbReference type="UniProtKB" id="Q9Y4P1"/>
    </source>
</evidence>
<evidence type="ECO:0000256" key="3">
    <source>
        <dbReference type="SAM" id="MobiDB-lite"/>
    </source>
</evidence>
<evidence type="ECO:0000305" key="4"/>
<gene>
    <name type="primary">ATG4</name>
    <name type="ordered locus">DEHA2A07832g</name>
</gene>
<keyword id="KW-0072">Autophagy</keyword>
<keyword id="KW-0963">Cytoplasm</keyword>
<keyword id="KW-0378">Hydrolase</keyword>
<keyword id="KW-0539">Nucleus</keyword>
<keyword id="KW-0645">Protease</keyword>
<keyword id="KW-0653">Protein transport</keyword>
<keyword id="KW-1185">Reference proteome</keyword>
<keyword id="KW-0788">Thiol protease</keyword>
<keyword id="KW-0813">Transport</keyword>